<feature type="signal peptide" evidence="6">
    <location>
        <begin position="1"/>
        <end position="18"/>
    </location>
</feature>
<feature type="chain" id="PRO_5023972612" description="Ciliated left-right organizer metallopeptidase" evidence="4">
    <location>
        <begin position="19"/>
        <end position="699"/>
    </location>
</feature>
<feature type="topological domain" description="Extracellular" evidence="8">
    <location>
        <begin position="19"/>
        <end position="663"/>
    </location>
</feature>
<feature type="transmembrane region" description="Helical" evidence="4">
    <location>
        <begin position="664"/>
        <end position="684"/>
    </location>
</feature>
<feature type="topological domain" description="Cytoplasmic" evidence="8">
    <location>
        <begin position="685"/>
        <end position="699"/>
    </location>
</feature>
<feature type="active site" evidence="5">
    <location>
        <position position="239"/>
    </location>
</feature>
<feature type="binding site" evidence="5">
    <location>
        <position position="238"/>
    </location>
    <ligand>
        <name>Zn(2+)</name>
        <dbReference type="ChEBI" id="CHEBI:29105"/>
        <note>catalytic</note>
    </ligand>
</feature>
<feature type="binding site" evidence="5">
    <location>
        <position position="242"/>
    </location>
    <ligand>
        <name>Zn(2+)</name>
        <dbReference type="ChEBI" id="CHEBI:29105"/>
        <note>catalytic</note>
    </ligand>
</feature>
<feature type="binding site" evidence="5">
    <location>
        <position position="318"/>
    </location>
    <ligand>
        <name>Zn(2+)</name>
        <dbReference type="ChEBI" id="CHEBI:29105"/>
        <note>catalytic</note>
    </ligand>
</feature>
<reference key="1">
    <citation type="journal article" date="2009" name="PLoS Biol.">
        <title>Lineage-specific biology revealed by a finished genome assembly of the mouse.</title>
        <authorList>
            <person name="Church D.M."/>
            <person name="Goodstadt L."/>
            <person name="Hillier L.W."/>
            <person name="Zody M.C."/>
            <person name="Goldstein S."/>
            <person name="She X."/>
            <person name="Bult C.J."/>
            <person name="Agarwala R."/>
            <person name="Cherry J.L."/>
            <person name="DiCuccio M."/>
            <person name="Hlavina W."/>
            <person name="Kapustin Y."/>
            <person name="Meric P."/>
            <person name="Maglott D."/>
            <person name="Birtle Z."/>
            <person name="Marques A.C."/>
            <person name="Graves T."/>
            <person name="Zhou S."/>
            <person name="Teague B."/>
            <person name="Potamousis K."/>
            <person name="Churas C."/>
            <person name="Place M."/>
            <person name="Herschleb J."/>
            <person name="Runnheim R."/>
            <person name="Forrest D."/>
            <person name="Amos-Landgraf J."/>
            <person name="Schwartz D.C."/>
            <person name="Cheng Z."/>
            <person name="Lindblad-Toh K."/>
            <person name="Eichler E.E."/>
            <person name="Ponting C.P."/>
        </authorList>
    </citation>
    <scope>NUCLEOTIDE SEQUENCE [LARGE SCALE GENOMIC DNA]</scope>
    <source>
        <strain>C57BL/6J</strain>
    </source>
</reference>
<reference key="2">
    <citation type="journal article" date="2022" name="Nat. Genet.">
        <title>Discovery of a genetic module essential for assigning left-right asymmetry in humans and ancestral vertebrates.</title>
        <authorList>
            <person name="Szenker-Ravi E."/>
            <person name="Ott T."/>
            <person name="Khatoo M."/>
            <person name="de Bellaing A.M."/>
            <person name="Goh W.X."/>
            <person name="Chong Y.L."/>
            <person name="Beckers A."/>
            <person name="Kannesan D."/>
            <person name="Louvel G."/>
            <person name="Anujan P."/>
            <person name="Ravi V."/>
            <person name="Bonnard C."/>
            <person name="Moutton S."/>
            <person name="Schoen P."/>
            <person name="Fradin M."/>
            <person name="Colin E."/>
            <person name="Megarbane A."/>
            <person name="Daou L."/>
            <person name="Chehab G."/>
            <person name="Di Filippo S."/>
            <person name="Rooryck C."/>
            <person name="Deleuze J.F."/>
            <person name="Boland A."/>
            <person name="Arribard N."/>
            <person name="Eker R."/>
            <person name="Tohari S."/>
            <person name="Ng A.Y."/>
            <person name="Rio M."/>
            <person name="Lim C.T."/>
            <person name="Eisenhaber B."/>
            <person name="Eisenhaber F."/>
            <person name="Venkatesh B."/>
            <person name="Amiel J."/>
            <person name="Crollius H.R."/>
            <person name="Gordon C.T."/>
            <person name="Gossler A."/>
            <person name="Roy S."/>
            <person name="Attie-Bitach T."/>
            <person name="Blum M."/>
            <person name="Bouvagnet P."/>
            <person name="Reversade B."/>
        </authorList>
    </citation>
    <scope>TISSUE SPECIFICITY</scope>
    <scope>DEVELOPMENTAL STAGE</scope>
</reference>
<evidence type="ECO:0000250" key="1">
    <source>
        <dbReference type="UniProtKB" id="A0A1D5NSK0"/>
    </source>
</evidence>
<evidence type="ECO:0000250" key="2">
    <source>
        <dbReference type="UniProtKB" id="P08148"/>
    </source>
</evidence>
<evidence type="ECO:0000250" key="3">
    <source>
        <dbReference type="UniProtKB" id="Q9VH19"/>
    </source>
</evidence>
<evidence type="ECO:0000255" key="4"/>
<evidence type="ECO:0000255" key="5">
    <source>
        <dbReference type="PROSITE-ProRule" id="PRU10095"/>
    </source>
</evidence>
<evidence type="ECO:0000255" key="6">
    <source>
        <dbReference type="RuleBase" id="RU366077"/>
    </source>
</evidence>
<evidence type="ECO:0000269" key="7">
    <source>
    </source>
</evidence>
<evidence type="ECO:0000305" key="8"/>
<evidence type="ECO:0000312" key="9">
    <source>
        <dbReference type="MGI" id="MGI:5588935"/>
    </source>
</evidence>
<organism>
    <name type="scientific">Mus musculus</name>
    <name type="common">Mouse</name>
    <dbReference type="NCBI Taxonomy" id="10090"/>
    <lineage>
        <taxon>Eukaryota</taxon>
        <taxon>Metazoa</taxon>
        <taxon>Chordata</taxon>
        <taxon>Craniata</taxon>
        <taxon>Vertebrata</taxon>
        <taxon>Euteleostomi</taxon>
        <taxon>Mammalia</taxon>
        <taxon>Eutheria</taxon>
        <taxon>Euarchontoglires</taxon>
        <taxon>Glires</taxon>
        <taxon>Rodentia</taxon>
        <taxon>Myomorpha</taxon>
        <taxon>Muroidea</taxon>
        <taxon>Muridae</taxon>
        <taxon>Murinae</taxon>
        <taxon>Mus</taxon>
        <taxon>Mus</taxon>
    </lineage>
</organism>
<accession>A0A286YEC0</accession>
<gene>
    <name evidence="9" type="primary">Cirop</name>
    <name evidence="9" type="synonym">Gm29776</name>
</gene>
<name>CIROP_MOUSE</name>
<proteinExistence type="evidence at transcript level"/>
<keyword id="KW-0378">Hydrolase</keyword>
<keyword id="KW-0472">Membrane</keyword>
<keyword id="KW-0479">Metal-binding</keyword>
<keyword id="KW-0482">Metalloprotease</keyword>
<keyword id="KW-0645">Protease</keyword>
<keyword id="KW-1185">Reference proteome</keyword>
<keyword id="KW-0732">Signal</keyword>
<keyword id="KW-0812">Transmembrane</keyword>
<keyword id="KW-1133">Transmembrane helix</keyword>
<keyword id="KW-0862">Zinc</keyword>
<protein>
    <recommendedName>
        <fullName evidence="9">Ciliated left-right organizer metallopeptidase</fullName>
        <ecNumber evidence="3">3.4.24.-</ecNumber>
    </recommendedName>
    <alternativeName>
        <fullName>Leishmanolysin-like peptidase 2</fullName>
    </alternativeName>
</protein>
<dbReference type="EC" id="3.4.24.-" evidence="3"/>
<dbReference type="EMBL" id="CT009512">
    <property type="status" value="NOT_ANNOTATED_CDS"/>
    <property type="molecule type" value="Genomic_DNA"/>
</dbReference>
<dbReference type="SMR" id="A0A286YEC0"/>
<dbReference type="FunCoup" id="A0A286YEC0">
    <property type="interactions" value="89"/>
</dbReference>
<dbReference type="Ensembl" id="ENSMUST00000224691.3">
    <property type="protein sequence ID" value="ENSMUSP00000153646.2"/>
    <property type="gene ID" value="ENSMUSG00000114865.3"/>
</dbReference>
<dbReference type="AGR" id="MGI:5588935"/>
<dbReference type="MGI" id="MGI:5588935">
    <property type="gene designation" value="Cirop"/>
</dbReference>
<dbReference type="VEuPathDB" id="HostDB:ENSMUSG00000114865"/>
<dbReference type="GeneTree" id="ENSGT00940000163573"/>
<dbReference type="InParanoid" id="A0A286YEC0"/>
<dbReference type="OMA" id="CTERGAY"/>
<dbReference type="OrthoDB" id="527990at2759"/>
<dbReference type="PRO" id="PR:A0A286YEC0"/>
<dbReference type="Proteomes" id="UP000000589">
    <property type="component" value="Chromosome 14"/>
</dbReference>
<dbReference type="RNAct" id="A0A286YEC0">
    <property type="molecule type" value="protein"/>
</dbReference>
<dbReference type="Bgee" id="ENSMUSG00000114865">
    <property type="expression patterns" value="Expressed in epiblast cell in embryo and 9 other cell types or tissues"/>
</dbReference>
<dbReference type="ExpressionAtlas" id="A0A286YEC0">
    <property type="expression patterns" value="baseline and differential"/>
</dbReference>
<dbReference type="GO" id="GO:0016020">
    <property type="term" value="C:membrane"/>
    <property type="evidence" value="ECO:0007669"/>
    <property type="project" value="UniProtKB-SubCell"/>
</dbReference>
<dbReference type="GO" id="GO:0046872">
    <property type="term" value="F:metal ion binding"/>
    <property type="evidence" value="ECO:0007669"/>
    <property type="project" value="UniProtKB-KW"/>
</dbReference>
<dbReference type="GO" id="GO:0004222">
    <property type="term" value="F:metalloendopeptidase activity"/>
    <property type="evidence" value="ECO:0007669"/>
    <property type="project" value="InterPro"/>
</dbReference>
<dbReference type="GO" id="GO:0007155">
    <property type="term" value="P:cell adhesion"/>
    <property type="evidence" value="ECO:0007669"/>
    <property type="project" value="InterPro"/>
</dbReference>
<dbReference type="GO" id="GO:0061966">
    <property type="term" value="P:establishment of left/right asymmetry"/>
    <property type="evidence" value="ECO:0000250"/>
    <property type="project" value="UniProtKB"/>
</dbReference>
<dbReference type="GO" id="GO:0006508">
    <property type="term" value="P:proteolysis"/>
    <property type="evidence" value="ECO:0007669"/>
    <property type="project" value="UniProtKB-KW"/>
</dbReference>
<dbReference type="FunFam" id="3.90.132.10:FF:000002">
    <property type="entry name" value="Leishmanolysin like peptidase 2"/>
    <property type="match status" value="1"/>
</dbReference>
<dbReference type="FunFam" id="3.10.170.20:FF:000012">
    <property type="entry name" value="Leishmanolysin-like peptidase 2"/>
    <property type="match status" value="1"/>
</dbReference>
<dbReference type="Gene3D" id="3.10.170.20">
    <property type="match status" value="1"/>
</dbReference>
<dbReference type="Gene3D" id="3.90.132.10">
    <property type="entry name" value="Leishmanolysin , domain 2"/>
    <property type="match status" value="1"/>
</dbReference>
<dbReference type="InterPro" id="IPR001577">
    <property type="entry name" value="Peptidase_M8"/>
</dbReference>
<dbReference type="PANTHER" id="PTHR10942:SF6">
    <property type="entry name" value="CILIATED LEFT-RIGHT ORGANIZER METALLOPEPTIDASE"/>
    <property type="match status" value="1"/>
</dbReference>
<dbReference type="PANTHER" id="PTHR10942">
    <property type="entry name" value="LEISHMANOLYSIN-LIKE PEPTIDASE"/>
    <property type="match status" value="1"/>
</dbReference>
<dbReference type="Pfam" id="PF01457">
    <property type="entry name" value="Peptidase_M8"/>
    <property type="match status" value="1"/>
</dbReference>
<dbReference type="SUPFAM" id="SSF55486">
    <property type="entry name" value="Metalloproteases ('zincins'), catalytic domain"/>
    <property type="match status" value="1"/>
</dbReference>
<dbReference type="PROSITE" id="PS00142">
    <property type="entry name" value="ZINC_PROTEASE"/>
    <property type="match status" value="1"/>
</dbReference>
<sequence>MKMWRLLLLGVATGRCLHEETQKSVRLLRPPFSQMPTHFRSSILPLPGSHEPRPLRIQTYYSRAPVPGEAWDPEGETRALAAVTETTRRIQGILAVLPVQGPLLLSRDPAQYCHAVWGDPDTPNYQRCSILNPGYKGESCLGAKIPDAHLRGYSLWPEHGLPQLIQPDGPGVQNADFLLYVQVAHTSKCHKEPSVIAYAACCQLDSEDRPLAGTIVYCGQHLRSPTLSHDDIVMATLHELLHALGFSGQLFKMWRDCPSGLSARENCSTRKQVTRRDERGQLLLTTPAVSHSLAKHLGVPGTLQGAPLEEKQGSLSSHWESRLLQGSIMTATFHGAQHTRLDPVTLAAFEDSGWYQVNHSAAEELLWGQGSGPDFGLVSTCRTGSSDFFCTGSGLGCHYLHLDKGSCDSDSTLEGCRIYKPLAKGSECWKEENGLHTRAENPHGEIYHRHSRCFLANLTSQVLSKHTSQPSTAPDLEDPTGCCYLHQCTHKGAYEVQVEGSPWIPCLPGKAVQIPGYDGLLYCPQGRLCLRDEGARAATSQPMSFTTQDLLSQLSLRLTGTPGHSLGKGQREELAEVVLQALVMRAGTSRCYFHSPTITTSLVFTVSMWKSPGCHGPSVAMLHRTLTLTLQMKPLQVHHGEAIFTTDYSKLWTSLDHNPSMTELLLSTGFCLLVLILVGALGTLAYQKRAMLQVAPSTT</sequence>
<comment type="function">
    <text evidence="1">Putative metalloproteinase that plays a role in left-right patterning process.</text>
</comment>
<comment type="cofactor">
    <cofactor evidence="2">
        <name>Zn(2+)</name>
        <dbReference type="ChEBI" id="CHEBI:29105"/>
    </cofactor>
    <text evidence="2">Binds 1 zinc ion per subunit.</text>
</comment>
<comment type="subcellular location">
    <subcellularLocation>
        <location evidence="4">Membrane</location>
        <topology evidence="4">Single-pass type I membrane protein</topology>
    </subcellularLocation>
</comment>
<comment type="tissue specificity">
    <text evidence="7">Specifically expressed in ciliated left-right organizer.</text>
</comment>
<comment type="developmental stage">
    <text evidence="7">Strong levels in the ventral node from the early bud to the four-somite stage. Expression is enriched in the perinodal crown cells and become asymmetric at the three-somite stage.</text>
</comment>
<comment type="similarity">
    <text evidence="8">Belongs to the peptidase M8 family.</text>
</comment>